<evidence type="ECO:0000250" key="1"/>
<evidence type="ECO:0000305" key="2"/>
<protein>
    <recommendedName>
        <fullName>NADP-dependent alcohol dehydrogenase C</fullName>
        <ecNumber>1.1.1.2</ecNumber>
    </recommendedName>
</protein>
<feature type="chain" id="PRO_0000426800" description="NADP-dependent alcohol dehydrogenase C">
    <location>
        <begin position="1"/>
        <end position="346"/>
    </location>
</feature>
<feature type="binding site" evidence="1">
    <location>
        <position position="41"/>
    </location>
    <ligand>
        <name>Zn(2+)</name>
        <dbReference type="ChEBI" id="CHEBI:29105"/>
        <label>1</label>
        <note>catalytic</note>
    </ligand>
</feature>
<feature type="binding site" evidence="1">
    <location>
        <position position="63"/>
    </location>
    <ligand>
        <name>Zn(2+)</name>
        <dbReference type="ChEBI" id="CHEBI:29105"/>
        <label>1</label>
        <note>catalytic</note>
    </ligand>
</feature>
<feature type="binding site" evidence="1">
    <location>
        <position position="94"/>
    </location>
    <ligand>
        <name>Zn(2+)</name>
        <dbReference type="ChEBI" id="CHEBI:29105"/>
        <label>2</label>
    </ligand>
</feature>
<feature type="binding site" evidence="1">
    <location>
        <position position="97"/>
    </location>
    <ligand>
        <name>Zn(2+)</name>
        <dbReference type="ChEBI" id="CHEBI:29105"/>
        <label>2</label>
    </ligand>
</feature>
<feature type="binding site" evidence="1">
    <location>
        <position position="100"/>
    </location>
    <ligand>
        <name>Zn(2+)</name>
        <dbReference type="ChEBI" id="CHEBI:29105"/>
        <label>2</label>
    </ligand>
</feature>
<feature type="binding site" evidence="1">
    <location>
        <position position="108"/>
    </location>
    <ligand>
        <name>Zn(2+)</name>
        <dbReference type="ChEBI" id="CHEBI:29105"/>
        <label>2</label>
    </ligand>
</feature>
<feature type="binding site" evidence="1">
    <location>
        <position position="158"/>
    </location>
    <ligand>
        <name>Zn(2+)</name>
        <dbReference type="ChEBI" id="CHEBI:29105"/>
        <label>1</label>
        <note>catalytic</note>
    </ligand>
</feature>
<reference key="1">
    <citation type="journal article" date="2002" name="J. Bacteriol.">
        <title>Whole-genome comparison of Mycobacterium tuberculosis clinical and laboratory strains.</title>
        <authorList>
            <person name="Fleischmann R.D."/>
            <person name="Alland D."/>
            <person name="Eisen J.A."/>
            <person name="Carpenter L."/>
            <person name="White O."/>
            <person name="Peterson J.D."/>
            <person name="DeBoy R.T."/>
            <person name="Dodson R.J."/>
            <person name="Gwinn M.L."/>
            <person name="Haft D.H."/>
            <person name="Hickey E.K."/>
            <person name="Kolonay J.F."/>
            <person name="Nelson W.C."/>
            <person name="Umayam L.A."/>
            <person name="Ermolaeva M.D."/>
            <person name="Salzberg S.L."/>
            <person name="Delcher A."/>
            <person name="Utterback T.R."/>
            <person name="Weidman J.F."/>
            <person name="Khouri H.M."/>
            <person name="Gill J."/>
            <person name="Mikula A."/>
            <person name="Bishai W."/>
            <person name="Jacobs W.R. Jr."/>
            <person name="Venter J.C."/>
            <person name="Fraser C.M."/>
        </authorList>
    </citation>
    <scope>NUCLEOTIDE SEQUENCE [LARGE SCALE GENOMIC DNA]</scope>
    <source>
        <strain>CDC 1551 / Oshkosh</strain>
    </source>
</reference>
<comment type="catalytic activity">
    <reaction>
        <text>a primary alcohol + NADP(+) = an aldehyde + NADPH + H(+)</text>
        <dbReference type="Rhea" id="RHEA:15937"/>
        <dbReference type="ChEBI" id="CHEBI:15378"/>
        <dbReference type="ChEBI" id="CHEBI:15734"/>
        <dbReference type="ChEBI" id="CHEBI:17478"/>
        <dbReference type="ChEBI" id="CHEBI:57783"/>
        <dbReference type="ChEBI" id="CHEBI:58349"/>
        <dbReference type="EC" id="1.1.1.2"/>
    </reaction>
</comment>
<comment type="cofactor">
    <cofactor evidence="1">
        <name>Zn(2+)</name>
        <dbReference type="ChEBI" id="CHEBI:29105"/>
    </cofactor>
    <text evidence="1">Binds 2 Zn(2+) ions per subunit.</text>
</comment>
<comment type="similarity">
    <text evidence="2">Belongs to the zinc-containing alcohol dehydrogenase family.</text>
</comment>
<organism>
    <name type="scientific">Mycobacterium tuberculosis (strain CDC 1551 / Oshkosh)</name>
    <dbReference type="NCBI Taxonomy" id="83331"/>
    <lineage>
        <taxon>Bacteria</taxon>
        <taxon>Bacillati</taxon>
        <taxon>Actinomycetota</taxon>
        <taxon>Actinomycetes</taxon>
        <taxon>Mycobacteriales</taxon>
        <taxon>Mycobacteriaceae</taxon>
        <taxon>Mycobacterium</taxon>
        <taxon>Mycobacterium tuberculosis complex</taxon>
    </lineage>
</organism>
<sequence length="346" mass="37075">MSTVAAYAAMSATEPLTKTTITRRDPGPHDVAIDIKFAGICHSDIHTVKAEWGQPNYPVVPGHEIAGVVTAVGSEVTKYRQGDRVGVGCFVDSCRECNSCTRGIEQYCKPGANFTYNSIGKDGQPTQGGYSEAIVVDENYVLRIPDVLPLDVAAPLLCAGITLYSPLRHWNAGANTRVAIIGLGGLGHMGVKLGAAMGADVTVLSQSLKKMEDGLRLGAKSYYATADPDTFRKLRGGFDLILNTVSANLDLGQYLNLLDVDGTLVELGIPEHPMAVPAFALALMRRSLAGSNIGGIAETQEMLNFCAEHGVTPEIELIEPDYINDAYERVLASDVRYRFVIDISAL</sequence>
<dbReference type="EC" id="1.1.1.2"/>
<dbReference type="EMBL" id="AE000516">
    <property type="protein sequence ID" value="AAK47460.1"/>
    <property type="molecule type" value="Genomic_DNA"/>
</dbReference>
<dbReference type="PIR" id="H70860">
    <property type="entry name" value="H70860"/>
</dbReference>
<dbReference type="RefSeq" id="WP_003415965.1">
    <property type="nucleotide sequence ID" value="NZ_KK341227.1"/>
</dbReference>
<dbReference type="SMR" id="P9WQC4"/>
<dbReference type="KEGG" id="mtc:MT3130"/>
<dbReference type="PATRIC" id="fig|83331.31.peg.3373"/>
<dbReference type="HOGENOM" id="CLU_026673_20_2_11"/>
<dbReference type="Proteomes" id="UP000001020">
    <property type="component" value="Chromosome"/>
</dbReference>
<dbReference type="GO" id="GO:0008106">
    <property type="term" value="F:alcohol dehydrogenase (NADP+) activity"/>
    <property type="evidence" value="ECO:0007669"/>
    <property type="project" value="UniProtKB-EC"/>
</dbReference>
<dbReference type="GO" id="GO:0008270">
    <property type="term" value="F:zinc ion binding"/>
    <property type="evidence" value="ECO:0007669"/>
    <property type="project" value="InterPro"/>
</dbReference>
<dbReference type="CDD" id="cd05283">
    <property type="entry name" value="CAD1"/>
    <property type="match status" value="1"/>
</dbReference>
<dbReference type="FunFam" id="3.40.50.720:FF:000022">
    <property type="entry name" value="Cinnamyl alcohol dehydrogenase"/>
    <property type="match status" value="1"/>
</dbReference>
<dbReference type="Gene3D" id="3.90.180.10">
    <property type="entry name" value="Medium-chain alcohol dehydrogenases, catalytic domain"/>
    <property type="match status" value="1"/>
</dbReference>
<dbReference type="Gene3D" id="3.40.50.720">
    <property type="entry name" value="NAD(P)-binding Rossmann-like Domain"/>
    <property type="match status" value="1"/>
</dbReference>
<dbReference type="InterPro" id="IPR013149">
    <property type="entry name" value="ADH-like_C"/>
</dbReference>
<dbReference type="InterPro" id="IPR013154">
    <property type="entry name" value="ADH-like_N"/>
</dbReference>
<dbReference type="InterPro" id="IPR002328">
    <property type="entry name" value="ADH_Zn_CS"/>
</dbReference>
<dbReference type="InterPro" id="IPR047109">
    <property type="entry name" value="CAD-like"/>
</dbReference>
<dbReference type="InterPro" id="IPR011032">
    <property type="entry name" value="GroES-like_sf"/>
</dbReference>
<dbReference type="InterPro" id="IPR036291">
    <property type="entry name" value="NAD(P)-bd_dom_sf"/>
</dbReference>
<dbReference type="InterPro" id="IPR020843">
    <property type="entry name" value="PKS_ER"/>
</dbReference>
<dbReference type="PANTHER" id="PTHR42683">
    <property type="entry name" value="ALDEHYDE REDUCTASE"/>
    <property type="match status" value="1"/>
</dbReference>
<dbReference type="Pfam" id="PF08240">
    <property type="entry name" value="ADH_N"/>
    <property type="match status" value="1"/>
</dbReference>
<dbReference type="Pfam" id="PF00107">
    <property type="entry name" value="ADH_zinc_N"/>
    <property type="match status" value="1"/>
</dbReference>
<dbReference type="SMART" id="SM00829">
    <property type="entry name" value="PKS_ER"/>
    <property type="match status" value="1"/>
</dbReference>
<dbReference type="SUPFAM" id="SSF50129">
    <property type="entry name" value="GroES-like"/>
    <property type="match status" value="1"/>
</dbReference>
<dbReference type="SUPFAM" id="SSF51735">
    <property type="entry name" value="NAD(P)-binding Rossmann-fold domains"/>
    <property type="match status" value="1"/>
</dbReference>
<dbReference type="PROSITE" id="PS00059">
    <property type="entry name" value="ADH_ZINC"/>
    <property type="match status" value="1"/>
</dbReference>
<gene>
    <name type="primary">adhC</name>
    <name type="synonym">adh</name>
    <name type="ordered locus">MT3130</name>
</gene>
<proteinExistence type="inferred from homology"/>
<accession>P9WQC4</accession>
<accession>L0TE62</accession>
<accession>P0A4X0</accession>
<accession>P31975</accession>
<name>ADHC_MYCTO</name>
<keyword id="KW-0479">Metal-binding</keyword>
<keyword id="KW-0521">NADP</keyword>
<keyword id="KW-0560">Oxidoreductase</keyword>
<keyword id="KW-1185">Reference proteome</keyword>
<keyword id="KW-0862">Zinc</keyword>